<keyword id="KW-0227">DNA damage</keyword>
<keyword id="KW-0238">DNA-binding</keyword>
<keyword id="KW-1185">Reference proteome</keyword>
<comment type="function">
    <text evidence="1">Involved in DNA damage recognition. Binds DNA containing O(6)-methylguanine and larger O(6)-alkylguanine adducts. Binds to the damaged base and flips the base out of the DNA duplex into an extrahelical conformation, which allows processing by repair proteins.</text>
</comment>
<comment type="similarity">
    <text evidence="3">Belongs to the MGMT family. ATL subfamily.</text>
</comment>
<comment type="sequence caution" evidence="3">
    <conflict type="erroneous initiation">
        <sequence resource="EMBL-CDS" id="AAN42056"/>
    </conflict>
    <text>Truncated N-terminus.</text>
</comment>
<comment type="sequence caution" evidence="3">
    <conflict type="erroneous initiation">
        <sequence resource="EMBL-CDS" id="AAP15933"/>
    </conflict>
    <text>Truncated N-terminus.</text>
</comment>
<gene>
    <name evidence="1" type="primary">atl</name>
    <name type="synonym">ybaZ</name>
    <name type="ordered locus">SF0400</name>
    <name type="ordered locus">S0406</name>
</gene>
<dbReference type="EMBL" id="AE005674">
    <property type="protein sequence ID" value="AAN42056.2"/>
    <property type="status" value="ALT_INIT"/>
    <property type="molecule type" value="Genomic_DNA"/>
</dbReference>
<dbReference type="EMBL" id="AE014073">
    <property type="protein sequence ID" value="AAP15933.1"/>
    <property type="status" value="ALT_INIT"/>
    <property type="molecule type" value="Genomic_DNA"/>
</dbReference>
<dbReference type="RefSeq" id="NP_706349.2">
    <property type="nucleotide sequence ID" value="NC_004337.2"/>
</dbReference>
<dbReference type="SMR" id="P0AFP3"/>
<dbReference type="PaxDb" id="198214-SF0400"/>
<dbReference type="GeneID" id="1027693"/>
<dbReference type="KEGG" id="sfl:SF0400"/>
<dbReference type="KEGG" id="sfx:S0406"/>
<dbReference type="PATRIC" id="fig|198214.7.peg.459"/>
<dbReference type="HOGENOM" id="CLU_000445_52_5_6"/>
<dbReference type="Proteomes" id="UP000001006">
    <property type="component" value="Chromosome"/>
</dbReference>
<dbReference type="Proteomes" id="UP000002673">
    <property type="component" value="Chromosome"/>
</dbReference>
<dbReference type="GO" id="GO:0003824">
    <property type="term" value="F:catalytic activity"/>
    <property type="evidence" value="ECO:0007669"/>
    <property type="project" value="InterPro"/>
</dbReference>
<dbReference type="GO" id="GO:0003677">
    <property type="term" value="F:DNA binding"/>
    <property type="evidence" value="ECO:0007669"/>
    <property type="project" value="UniProtKB-KW"/>
</dbReference>
<dbReference type="GO" id="GO:0006281">
    <property type="term" value="P:DNA repair"/>
    <property type="evidence" value="ECO:0007669"/>
    <property type="project" value="InterPro"/>
</dbReference>
<dbReference type="CDD" id="cd06445">
    <property type="entry name" value="ATase"/>
    <property type="match status" value="1"/>
</dbReference>
<dbReference type="FunFam" id="1.10.10.10:FF:000148">
    <property type="entry name" value="6-O-methylguanine DNA methyltransferase"/>
    <property type="match status" value="1"/>
</dbReference>
<dbReference type="Gene3D" id="1.10.10.10">
    <property type="entry name" value="Winged helix-like DNA-binding domain superfamily/Winged helix DNA-binding domain"/>
    <property type="match status" value="1"/>
</dbReference>
<dbReference type="InterPro" id="IPR052520">
    <property type="entry name" value="ATL_DNA_repair"/>
</dbReference>
<dbReference type="InterPro" id="IPR014048">
    <property type="entry name" value="MethylDNA_cys_MeTrfase_DNA-bd"/>
</dbReference>
<dbReference type="InterPro" id="IPR036217">
    <property type="entry name" value="MethylDNA_cys_MeTrfase_DNAb"/>
</dbReference>
<dbReference type="InterPro" id="IPR036388">
    <property type="entry name" value="WH-like_DNA-bd_sf"/>
</dbReference>
<dbReference type="NCBIfam" id="TIGR00589">
    <property type="entry name" value="ogt"/>
    <property type="match status" value="1"/>
</dbReference>
<dbReference type="PANTHER" id="PTHR42942">
    <property type="entry name" value="6-O-METHYLGUANINE DNA METHYLTRANSFERASE"/>
    <property type="match status" value="1"/>
</dbReference>
<dbReference type="PANTHER" id="PTHR42942:SF1">
    <property type="entry name" value="ALKYLTRANSFERASE-LIKE PROTEIN 1"/>
    <property type="match status" value="1"/>
</dbReference>
<dbReference type="Pfam" id="PF01035">
    <property type="entry name" value="DNA_binding_1"/>
    <property type="match status" value="1"/>
</dbReference>
<dbReference type="SUPFAM" id="SSF46767">
    <property type="entry name" value="Methylated DNA-protein cysteine methyltransferase, C-terminal domain"/>
    <property type="match status" value="1"/>
</dbReference>
<name>ATL_SHIFL</name>
<accession>P0AFP3</accession>
<accession>P75707</accession>
<accession>P77119</accession>
<feature type="chain" id="PRO_0000139391" description="DNA base-flipping protein">
    <location>
        <begin position="1"/>
        <end position="129"/>
    </location>
</feature>
<feature type="site" description="Required for phosphate rotation/nucleotide flipping" evidence="2">
    <location>
        <position position="52"/>
    </location>
</feature>
<feature type="site" description="Arg finger, required for nucleotide flipping" evidence="2">
    <location>
        <position position="66"/>
    </location>
</feature>
<protein>
    <recommendedName>
        <fullName evidence="1">DNA base-flipping protein</fullName>
    </recommendedName>
    <alternativeName>
        <fullName evidence="1">Alkyltransferase-like protein ATL</fullName>
    </alternativeName>
</protein>
<evidence type="ECO:0000250" key="1">
    <source>
        <dbReference type="UniProtKB" id="P0AFP2"/>
    </source>
</evidence>
<evidence type="ECO:0000250" key="2">
    <source>
        <dbReference type="UniProtKB" id="Q9UTN9"/>
    </source>
</evidence>
<evidence type="ECO:0000305" key="3"/>
<proteinExistence type="inferred from homology"/>
<sequence length="129" mass="14450">MLVSCAMRLHSGVFPDYAEKLPQEEKMEKEDSFPQRVWQIVAAIPEGYVTTYGDVAKLAGSPRAARQVGGVLKRLPEGSTLPWHRVVNRHGTISLTGPDLQRQRQALLAEGVMVSGSGQIDLQRYRWNY</sequence>
<organism>
    <name type="scientific">Shigella flexneri</name>
    <dbReference type="NCBI Taxonomy" id="623"/>
    <lineage>
        <taxon>Bacteria</taxon>
        <taxon>Pseudomonadati</taxon>
        <taxon>Pseudomonadota</taxon>
        <taxon>Gammaproteobacteria</taxon>
        <taxon>Enterobacterales</taxon>
        <taxon>Enterobacteriaceae</taxon>
        <taxon>Shigella</taxon>
    </lineage>
</organism>
<reference key="1">
    <citation type="journal article" date="2002" name="Nucleic Acids Res.">
        <title>Genome sequence of Shigella flexneri 2a: insights into pathogenicity through comparison with genomes of Escherichia coli K12 and O157.</title>
        <authorList>
            <person name="Jin Q."/>
            <person name="Yuan Z."/>
            <person name="Xu J."/>
            <person name="Wang Y."/>
            <person name="Shen Y."/>
            <person name="Lu W."/>
            <person name="Wang J."/>
            <person name="Liu H."/>
            <person name="Yang J."/>
            <person name="Yang F."/>
            <person name="Zhang X."/>
            <person name="Zhang J."/>
            <person name="Yang G."/>
            <person name="Wu H."/>
            <person name="Qu D."/>
            <person name="Dong J."/>
            <person name="Sun L."/>
            <person name="Xue Y."/>
            <person name="Zhao A."/>
            <person name="Gao Y."/>
            <person name="Zhu J."/>
            <person name="Kan B."/>
            <person name="Ding K."/>
            <person name="Chen S."/>
            <person name="Cheng H."/>
            <person name="Yao Z."/>
            <person name="He B."/>
            <person name="Chen R."/>
            <person name="Ma D."/>
            <person name="Qiang B."/>
            <person name="Wen Y."/>
            <person name="Hou Y."/>
            <person name="Yu J."/>
        </authorList>
    </citation>
    <scope>NUCLEOTIDE SEQUENCE [LARGE SCALE GENOMIC DNA]</scope>
    <source>
        <strain>301 / Serotype 2a</strain>
    </source>
</reference>
<reference key="2">
    <citation type="journal article" date="2003" name="Infect. Immun.">
        <title>Complete genome sequence and comparative genomics of Shigella flexneri serotype 2a strain 2457T.</title>
        <authorList>
            <person name="Wei J."/>
            <person name="Goldberg M.B."/>
            <person name="Burland V."/>
            <person name="Venkatesan M.M."/>
            <person name="Deng W."/>
            <person name="Fournier G."/>
            <person name="Mayhew G.F."/>
            <person name="Plunkett G. III"/>
            <person name="Rose D.J."/>
            <person name="Darling A."/>
            <person name="Mau B."/>
            <person name="Perna N.T."/>
            <person name="Payne S.M."/>
            <person name="Runyen-Janecky L.J."/>
            <person name="Zhou S."/>
            <person name="Schwartz D.C."/>
            <person name="Blattner F.R."/>
        </authorList>
    </citation>
    <scope>NUCLEOTIDE SEQUENCE [LARGE SCALE GENOMIC DNA]</scope>
    <source>
        <strain>ATCC 700930 / 2457T / Serotype 2a</strain>
    </source>
</reference>